<proteinExistence type="inferred from homology"/>
<sequence length="328" mass="37881">MQNQLNTLLQSAKKSVADAQSEIVLEEIRVDYLGKKGKLTELLKSVGQMPADQRPLLGKAVNEIKREIQQLLNAKSTQLREKSLQEKLNKEKVDITLRGRYDHLGAIHPISRVSERVSQLFSMLGFQIAEGPEIENEYYNFEALNIPADHPARTMADTFYFSGDKLLRTHTSPVQIREMEKQGVPIRLIALGRVYRRDLDQTHTPMFHQVEGLVIDKRSTFANLKGLLQQFLNCFFEKDVRLRFRPSYFPFTEPSAEVDIYQPRTDKWLEVLGCGMVHPNVLRNLNIDPDEYSGFAFGIGLDRLAMLRYEVTDLRLFFENDLRFLGQF</sequence>
<reference key="1">
    <citation type="journal article" date="2009" name="Infect. Immun.">
        <title>Comparative genomics reveal extensive transposon-mediated genomic plasticity and diversity among potential effector proteins within the genus Coxiella.</title>
        <authorList>
            <person name="Beare P.A."/>
            <person name="Unsworth N."/>
            <person name="Andoh M."/>
            <person name="Voth D.E."/>
            <person name="Omsland A."/>
            <person name="Gilk S.D."/>
            <person name="Williams K.P."/>
            <person name="Sobral B.W."/>
            <person name="Kupko J.J. III"/>
            <person name="Porcella S.F."/>
            <person name="Samuel J.E."/>
            <person name="Heinzen R.A."/>
        </authorList>
    </citation>
    <scope>NUCLEOTIDE SEQUENCE [LARGE SCALE GENOMIC DNA]</scope>
    <source>
        <strain>CbuG_Q212</strain>
    </source>
</reference>
<organism>
    <name type="scientific">Coxiella burnetii (strain CbuG_Q212)</name>
    <name type="common">Coxiella burnetii (strain Q212)</name>
    <dbReference type="NCBI Taxonomy" id="434923"/>
    <lineage>
        <taxon>Bacteria</taxon>
        <taxon>Pseudomonadati</taxon>
        <taxon>Pseudomonadota</taxon>
        <taxon>Gammaproteobacteria</taxon>
        <taxon>Legionellales</taxon>
        <taxon>Coxiellaceae</taxon>
        <taxon>Coxiella</taxon>
    </lineage>
</organism>
<name>SYFA_COXB2</name>
<feature type="chain" id="PRO_1000114863" description="Phenylalanine--tRNA ligase alpha subunit">
    <location>
        <begin position="1"/>
        <end position="328"/>
    </location>
</feature>
<feature type="binding site" evidence="1">
    <location>
        <position position="253"/>
    </location>
    <ligand>
        <name>Mg(2+)</name>
        <dbReference type="ChEBI" id="CHEBI:18420"/>
        <note>shared with beta subunit</note>
    </ligand>
</feature>
<protein>
    <recommendedName>
        <fullName evidence="1">Phenylalanine--tRNA ligase alpha subunit</fullName>
        <ecNumber evidence="1">6.1.1.20</ecNumber>
    </recommendedName>
    <alternativeName>
        <fullName evidence="1">Phenylalanyl-tRNA synthetase alpha subunit</fullName>
        <shortName evidence="1">PheRS</shortName>
    </alternativeName>
</protein>
<keyword id="KW-0030">Aminoacyl-tRNA synthetase</keyword>
<keyword id="KW-0067">ATP-binding</keyword>
<keyword id="KW-0963">Cytoplasm</keyword>
<keyword id="KW-0436">Ligase</keyword>
<keyword id="KW-0460">Magnesium</keyword>
<keyword id="KW-0479">Metal-binding</keyword>
<keyword id="KW-0547">Nucleotide-binding</keyword>
<keyword id="KW-0648">Protein biosynthesis</keyword>
<dbReference type="EC" id="6.1.1.20" evidence="1"/>
<dbReference type="EMBL" id="CP001019">
    <property type="protein sequence ID" value="ACJ18088.1"/>
    <property type="molecule type" value="Genomic_DNA"/>
</dbReference>
<dbReference type="RefSeq" id="WP_012569882.1">
    <property type="nucleotide sequence ID" value="NC_011527.1"/>
</dbReference>
<dbReference type="SMR" id="B6IZG0"/>
<dbReference type="KEGG" id="cbg:CbuG_0686"/>
<dbReference type="HOGENOM" id="CLU_025086_0_1_6"/>
<dbReference type="GO" id="GO:0005737">
    <property type="term" value="C:cytoplasm"/>
    <property type="evidence" value="ECO:0007669"/>
    <property type="project" value="UniProtKB-SubCell"/>
</dbReference>
<dbReference type="GO" id="GO:0005524">
    <property type="term" value="F:ATP binding"/>
    <property type="evidence" value="ECO:0007669"/>
    <property type="project" value="UniProtKB-UniRule"/>
</dbReference>
<dbReference type="GO" id="GO:0000287">
    <property type="term" value="F:magnesium ion binding"/>
    <property type="evidence" value="ECO:0007669"/>
    <property type="project" value="UniProtKB-UniRule"/>
</dbReference>
<dbReference type="GO" id="GO:0004826">
    <property type="term" value="F:phenylalanine-tRNA ligase activity"/>
    <property type="evidence" value="ECO:0007669"/>
    <property type="project" value="UniProtKB-UniRule"/>
</dbReference>
<dbReference type="GO" id="GO:0000049">
    <property type="term" value="F:tRNA binding"/>
    <property type="evidence" value="ECO:0007669"/>
    <property type="project" value="InterPro"/>
</dbReference>
<dbReference type="GO" id="GO:0006432">
    <property type="term" value="P:phenylalanyl-tRNA aminoacylation"/>
    <property type="evidence" value="ECO:0007669"/>
    <property type="project" value="UniProtKB-UniRule"/>
</dbReference>
<dbReference type="CDD" id="cd00496">
    <property type="entry name" value="PheRS_alpha_core"/>
    <property type="match status" value="1"/>
</dbReference>
<dbReference type="FunFam" id="3.30.930.10:FF:000003">
    <property type="entry name" value="Phenylalanine--tRNA ligase alpha subunit"/>
    <property type="match status" value="1"/>
</dbReference>
<dbReference type="Gene3D" id="3.30.930.10">
    <property type="entry name" value="Bira Bifunctional Protein, Domain 2"/>
    <property type="match status" value="1"/>
</dbReference>
<dbReference type="HAMAP" id="MF_00281">
    <property type="entry name" value="Phe_tRNA_synth_alpha1"/>
    <property type="match status" value="1"/>
</dbReference>
<dbReference type="InterPro" id="IPR006195">
    <property type="entry name" value="aa-tRNA-synth_II"/>
</dbReference>
<dbReference type="InterPro" id="IPR045864">
    <property type="entry name" value="aa-tRNA-synth_II/BPL/LPL"/>
</dbReference>
<dbReference type="InterPro" id="IPR004529">
    <property type="entry name" value="Phe-tRNA-synth_IIc_asu"/>
</dbReference>
<dbReference type="InterPro" id="IPR004188">
    <property type="entry name" value="Phe-tRNA_ligase_II_N"/>
</dbReference>
<dbReference type="InterPro" id="IPR022911">
    <property type="entry name" value="Phe_tRNA_ligase_alpha1_bac"/>
</dbReference>
<dbReference type="InterPro" id="IPR002319">
    <property type="entry name" value="Phenylalanyl-tRNA_Synthase"/>
</dbReference>
<dbReference type="InterPro" id="IPR010978">
    <property type="entry name" value="tRNA-bd_arm"/>
</dbReference>
<dbReference type="NCBIfam" id="TIGR00468">
    <property type="entry name" value="pheS"/>
    <property type="match status" value="1"/>
</dbReference>
<dbReference type="PANTHER" id="PTHR11538:SF41">
    <property type="entry name" value="PHENYLALANINE--TRNA LIGASE, MITOCHONDRIAL"/>
    <property type="match status" value="1"/>
</dbReference>
<dbReference type="PANTHER" id="PTHR11538">
    <property type="entry name" value="PHENYLALANYL-TRNA SYNTHETASE"/>
    <property type="match status" value="1"/>
</dbReference>
<dbReference type="Pfam" id="PF02912">
    <property type="entry name" value="Phe_tRNA-synt_N"/>
    <property type="match status" value="1"/>
</dbReference>
<dbReference type="Pfam" id="PF01409">
    <property type="entry name" value="tRNA-synt_2d"/>
    <property type="match status" value="1"/>
</dbReference>
<dbReference type="SUPFAM" id="SSF55681">
    <property type="entry name" value="Class II aaRS and biotin synthetases"/>
    <property type="match status" value="1"/>
</dbReference>
<dbReference type="SUPFAM" id="SSF46589">
    <property type="entry name" value="tRNA-binding arm"/>
    <property type="match status" value="1"/>
</dbReference>
<dbReference type="PROSITE" id="PS50862">
    <property type="entry name" value="AA_TRNA_LIGASE_II"/>
    <property type="match status" value="1"/>
</dbReference>
<comment type="catalytic activity">
    <reaction evidence="1">
        <text>tRNA(Phe) + L-phenylalanine + ATP = L-phenylalanyl-tRNA(Phe) + AMP + diphosphate + H(+)</text>
        <dbReference type="Rhea" id="RHEA:19413"/>
        <dbReference type="Rhea" id="RHEA-COMP:9668"/>
        <dbReference type="Rhea" id="RHEA-COMP:9699"/>
        <dbReference type="ChEBI" id="CHEBI:15378"/>
        <dbReference type="ChEBI" id="CHEBI:30616"/>
        <dbReference type="ChEBI" id="CHEBI:33019"/>
        <dbReference type="ChEBI" id="CHEBI:58095"/>
        <dbReference type="ChEBI" id="CHEBI:78442"/>
        <dbReference type="ChEBI" id="CHEBI:78531"/>
        <dbReference type="ChEBI" id="CHEBI:456215"/>
        <dbReference type="EC" id="6.1.1.20"/>
    </reaction>
</comment>
<comment type="cofactor">
    <cofactor evidence="1">
        <name>Mg(2+)</name>
        <dbReference type="ChEBI" id="CHEBI:18420"/>
    </cofactor>
    <text evidence="1">Binds 2 magnesium ions per tetramer.</text>
</comment>
<comment type="subunit">
    <text evidence="1">Tetramer of two alpha and two beta subunits.</text>
</comment>
<comment type="subcellular location">
    <subcellularLocation>
        <location evidence="1">Cytoplasm</location>
    </subcellularLocation>
</comment>
<comment type="similarity">
    <text evidence="1">Belongs to the class-II aminoacyl-tRNA synthetase family. Phe-tRNA synthetase alpha subunit type 1 subfamily.</text>
</comment>
<gene>
    <name evidence="1" type="primary">pheS</name>
    <name type="ordered locus">CbuG_0686</name>
</gene>
<accession>B6IZG0</accession>
<evidence type="ECO:0000255" key="1">
    <source>
        <dbReference type="HAMAP-Rule" id="MF_00281"/>
    </source>
</evidence>